<feature type="chain" id="PRO_1000091665" description="Ribonuclease HII">
    <location>
        <begin position="1"/>
        <end position="207"/>
    </location>
</feature>
<feature type="domain" description="RNase H type-2" evidence="2">
    <location>
        <begin position="20"/>
        <end position="207"/>
    </location>
</feature>
<feature type="binding site" evidence="1">
    <location>
        <position position="26"/>
    </location>
    <ligand>
        <name>a divalent metal cation</name>
        <dbReference type="ChEBI" id="CHEBI:60240"/>
    </ligand>
</feature>
<feature type="binding site" evidence="1">
    <location>
        <position position="27"/>
    </location>
    <ligand>
        <name>a divalent metal cation</name>
        <dbReference type="ChEBI" id="CHEBI:60240"/>
    </ligand>
</feature>
<feature type="binding site" evidence="1">
    <location>
        <position position="118"/>
    </location>
    <ligand>
        <name>a divalent metal cation</name>
        <dbReference type="ChEBI" id="CHEBI:60240"/>
    </ligand>
</feature>
<dbReference type="EC" id="3.1.26.4" evidence="1"/>
<dbReference type="EMBL" id="CP001139">
    <property type="protein sequence ID" value="ACH66990.1"/>
    <property type="molecule type" value="Genomic_DNA"/>
</dbReference>
<dbReference type="RefSeq" id="WP_005420535.1">
    <property type="nucleotide sequence ID" value="NC_011184.1"/>
</dbReference>
<dbReference type="SMR" id="B5F9W2"/>
<dbReference type="KEGG" id="vfm:VFMJ11_2082"/>
<dbReference type="HOGENOM" id="CLU_036532_3_2_6"/>
<dbReference type="Proteomes" id="UP000001857">
    <property type="component" value="Chromosome I"/>
</dbReference>
<dbReference type="GO" id="GO:0005737">
    <property type="term" value="C:cytoplasm"/>
    <property type="evidence" value="ECO:0007669"/>
    <property type="project" value="UniProtKB-SubCell"/>
</dbReference>
<dbReference type="GO" id="GO:0032299">
    <property type="term" value="C:ribonuclease H2 complex"/>
    <property type="evidence" value="ECO:0007669"/>
    <property type="project" value="TreeGrafter"/>
</dbReference>
<dbReference type="GO" id="GO:0030145">
    <property type="term" value="F:manganese ion binding"/>
    <property type="evidence" value="ECO:0007669"/>
    <property type="project" value="UniProtKB-UniRule"/>
</dbReference>
<dbReference type="GO" id="GO:0003723">
    <property type="term" value="F:RNA binding"/>
    <property type="evidence" value="ECO:0007669"/>
    <property type="project" value="InterPro"/>
</dbReference>
<dbReference type="GO" id="GO:0004523">
    <property type="term" value="F:RNA-DNA hybrid ribonuclease activity"/>
    <property type="evidence" value="ECO:0007669"/>
    <property type="project" value="UniProtKB-UniRule"/>
</dbReference>
<dbReference type="GO" id="GO:0043137">
    <property type="term" value="P:DNA replication, removal of RNA primer"/>
    <property type="evidence" value="ECO:0007669"/>
    <property type="project" value="TreeGrafter"/>
</dbReference>
<dbReference type="GO" id="GO:0006298">
    <property type="term" value="P:mismatch repair"/>
    <property type="evidence" value="ECO:0007669"/>
    <property type="project" value="TreeGrafter"/>
</dbReference>
<dbReference type="CDD" id="cd07182">
    <property type="entry name" value="RNase_HII_bacteria_HII_like"/>
    <property type="match status" value="1"/>
</dbReference>
<dbReference type="FunFam" id="3.30.420.10:FF:000006">
    <property type="entry name" value="Ribonuclease HII"/>
    <property type="match status" value="1"/>
</dbReference>
<dbReference type="Gene3D" id="3.30.420.10">
    <property type="entry name" value="Ribonuclease H-like superfamily/Ribonuclease H"/>
    <property type="match status" value="1"/>
</dbReference>
<dbReference type="HAMAP" id="MF_00052_B">
    <property type="entry name" value="RNase_HII_B"/>
    <property type="match status" value="1"/>
</dbReference>
<dbReference type="InterPro" id="IPR022898">
    <property type="entry name" value="RNase_HII"/>
</dbReference>
<dbReference type="InterPro" id="IPR001352">
    <property type="entry name" value="RNase_HII/HIII"/>
</dbReference>
<dbReference type="InterPro" id="IPR024567">
    <property type="entry name" value="RNase_HII/HIII_dom"/>
</dbReference>
<dbReference type="InterPro" id="IPR012337">
    <property type="entry name" value="RNaseH-like_sf"/>
</dbReference>
<dbReference type="InterPro" id="IPR036397">
    <property type="entry name" value="RNaseH_sf"/>
</dbReference>
<dbReference type="NCBIfam" id="NF000594">
    <property type="entry name" value="PRK00015.1-1"/>
    <property type="match status" value="1"/>
</dbReference>
<dbReference type="NCBIfam" id="NF000595">
    <property type="entry name" value="PRK00015.1-3"/>
    <property type="match status" value="1"/>
</dbReference>
<dbReference type="NCBIfam" id="NF000596">
    <property type="entry name" value="PRK00015.1-4"/>
    <property type="match status" value="1"/>
</dbReference>
<dbReference type="PANTHER" id="PTHR10954">
    <property type="entry name" value="RIBONUCLEASE H2 SUBUNIT A"/>
    <property type="match status" value="1"/>
</dbReference>
<dbReference type="PANTHER" id="PTHR10954:SF18">
    <property type="entry name" value="RIBONUCLEASE HII"/>
    <property type="match status" value="1"/>
</dbReference>
<dbReference type="Pfam" id="PF01351">
    <property type="entry name" value="RNase_HII"/>
    <property type="match status" value="1"/>
</dbReference>
<dbReference type="SUPFAM" id="SSF53098">
    <property type="entry name" value="Ribonuclease H-like"/>
    <property type="match status" value="1"/>
</dbReference>
<dbReference type="PROSITE" id="PS51975">
    <property type="entry name" value="RNASE_H_2"/>
    <property type="match status" value="1"/>
</dbReference>
<evidence type="ECO:0000255" key="1">
    <source>
        <dbReference type="HAMAP-Rule" id="MF_00052"/>
    </source>
</evidence>
<evidence type="ECO:0000255" key="2">
    <source>
        <dbReference type="PROSITE-ProRule" id="PRU01319"/>
    </source>
</evidence>
<reference key="1">
    <citation type="submission" date="2008-08" db="EMBL/GenBank/DDBJ databases">
        <title>Complete sequence of Vibrio fischeri strain MJ11.</title>
        <authorList>
            <person name="Mandel M.J."/>
            <person name="Stabb E.V."/>
            <person name="Ruby E.G."/>
            <person name="Ferriera S."/>
            <person name="Johnson J."/>
            <person name="Kravitz S."/>
            <person name="Beeson K."/>
            <person name="Sutton G."/>
            <person name="Rogers Y.-H."/>
            <person name="Friedman R."/>
            <person name="Frazier M."/>
            <person name="Venter J.C."/>
        </authorList>
    </citation>
    <scope>NUCLEOTIDE SEQUENCE [LARGE SCALE GENOMIC DNA]</scope>
    <source>
        <strain>MJ11</strain>
    </source>
</reference>
<comment type="function">
    <text evidence="1">Endonuclease that specifically degrades the RNA of RNA-DNA hybrids.</text>
</comment>
<comment type="catalytic activity">
    <reaction evidence="1">
        <text>Endonucleolytic cleavage to 5'-phosphomonoester.</text>
        <dbReference type="EC" id="3.1.26.4"/>
    </reaction>
</comment>
<comment type="cofactor">
    <cofactor evidence="1">
        <name>Mn(2+)</name>
        <dbReference type="ChEBI" id="CHEBI:29035"/>
    </cofactor>
    <cofactor evidence="1">
        <name>Mg(2+)</name>
        <dbReference type="ChEBI" id="CHEBI:18420"/>
    </cofactor>
    <text evidence="1">Manganese or magnesium. Binds 1 divalent metal ion per monomer in the absence of substrate. May bind a second metal ion after substrate binding.</text>
</comment>
<comment type="subcellular location">
    <subcellularLocation>
        <location evidence="1">Cytoplasm</location>
    </subcellularLocation>
</comment>
<comment type="similarity">
    <text evidence="1">Belongs to the RNase HII family.</text>
</comment>
<proteinExistence type="inferred from homology"/>
<organism>
    <name type="scientific">Aliivibrio fischeri (strain MJ11)</name>
    <name type="common">Vibrio fischeri</name>
    <dbReference type="NCBI Taxonomy" id="388396"/>
    <lineage>
        <taxon>Bacteria</taxon>
        <taxon>Pseudomonadati</taxon>
        <taxon>Pseudomonadota</taxon>
        <taxon>Gammaproteobacteria</taxon>
        <taxon>Vibrionales</taxon>
        <taxon>Vibrionaceae</taxon>
        <taxon>Aliivibrio</taxon>
    </lineage>
</organism>
<keyword id="KW-0963">Cytoplasm</keyword>
<keyword id="KW-0255">Endonuclease</keyword>
<keyword id="KW-0378">Hydrolase</keyword>
<keyword id="KW-0464">Manganese</keyword>
<keyword id="KW-0479">Metal-binding</keyword>
<keyword id="KW-0540">Nuclease</keyword>
<accession>B5F9W2</accession>
<name>RNH2_ALIFM</name>
<protein>
    <recommendedName>
        <fullName evidence="1">Ribonuclease HII</fullName>
        <shortName evidence="1">RNase HII</shortName>
        <ecNumber evidence="1">3.1.26.4</ecNumber>
    </recommendedName>
</protein>
<sequence>MTKKTESKELPPFEYPEGYQLFAGVDEVGRGPLVGAVVTAAVILDPNNPIEGLTDSKKLTDKKRELLFPEIQEKALAWSLGRCEAHEIDELNILQATMVAMQRAIAGLNITPDFALIDGNKVPELPMAGLAVVKGDLRVQEISAASIIAKVTRDREMEELDKAYPQYGFAKHKGYPTKAHFEAIEEHGVISEHRRSFKPVKRVLGIE</sequence>
<gene>
    <name evidence="1" type="primary">rnhB</name>
    <name type="ordered locus">VFMJ11_2082</name>
</gene>